<keyword id="KW-0325">Glycoprotein</keyword>
<keyword id="KW-0445">Lipid transport</keyword>
<keyword id="KW-1185">Reference proteome</keyword>
<keyword id="KW-0732">Signal</keyword>
<keyword id="KW-0813">Transport</keyword>
<comment type="function">
    <text evidence="1">Catalyzes the intermembrane transfer of phosphatidylglycerol and phosphatidylinositol.</text>
</comment>
<comment type="subunit">
    <text evidence="1">Monomer.</text>
</comment>
<comment type="similarity">
    <text evidence="3">Belongs to the NPC2 family.</text>
</comment>
<accession>Q54SW1</accession>
<feature type="signal peptide" evidence="2">
    <location>
        <begin position="1"/>
        <end position="20"/>
    </location>
</feature>
<feature type="chain" id="PRO_0000389016" description="Putative phosphatidylglycerol/phosphatidylinositol transfer protein DDB_G0282179">
    <location>
        <begin position="21"/>
        <end position="145"/>
    </location>
</feature>
<feature type="glycosylation site" description="N-linked (GlcNAc...) asparagine" evidence="2">
    <location>
        <position position="134"/>
    </location>
</feature>
<sequence length="145" mass="16156">MIKTILLLLINFMLILIVNGDIWNYCDGNINPTFKINKLTLLPDPPLVGKEVTISLEGSLNEQITSGSSIFNVAFFINGGWRQLPTFHNDICKVLSCPVSAGPFTYSTSIKVPIFTPHGQYKGQLTLTDQSNRNVTCLTFQTYLK</sequence>
<dbReference type="EMBL" id="AAFI02000045">
    <property type="protein sequence ID" value="EAL66369.2"/>
    <property type="molecule type" value="Genomic_DNA"/>
</dbReference>
<dbReference type="RefSeq" id="XP_640348.2">
    <property type="nucleotide sequence ID" value="XM_635256.2"/>
</dbReference>
<dbReference type="SMR" id="Q54SW1"/>
<dbReference type="GlyGen" id="Q54SW1">
    <property type="glycosylation" value="1 site"/>
</dbReference>
<dbReference type="PaxDb" id="44689-DDB0205176"/>
<dbReference type="EnsemblProtists" id="EAL66369">
    <property type="protein sequence ID" value="EAL66369"/>
    <property type="gene ID" value="DDB_G0282179"/>
</dbReference>
<dbReference type="GeneID" id="8623448"/>
<dbReference type="KEGG" id="ddi:DDB_G0282179"/>
<dbReference type="dictyBase" id="DDB_G0282179"/>
<dbReference type="VEuPathDB" id="AmoebaDB:DDB_G0282179"/>
<dbReference type="eggNOG" id="KOG4680">
    <property type="taxonomic scope" value="Eukaryota"/>
</dbReference>
<dbReference type="HOGENOM" id="CLU_1790513_0_0_1"/>
<dbReference type="InParanoid" id="Q54SW1"/>
<dbReference type="OMA" id="TCLTFNT"/>
<dbReference type="PhylomeDB" id="Q54SW1"/>
<dbReference type="Reactome" id="R-DDI-6798695">
    <property type="pathway name" value="Neutrophil degranulation"/>
</dbReference>
<dbReference type="Reactome" id="R-DDI-8964038">
    <property type="pathway name" value="LDL clearance"/>
</dbReference>
<dbReference type="PRO" id="PR:Q54SW1"/>
<dbReference type="Proteomes" id="UP000002195">
    <property type="component" value="Chromosome 3"/>
</dbReference>
<dbReference type="GO" id="GO:0032934">
    <property type="term" value="F:sterol binding"/>
    <property type="evidence" value="ECO:0000318"/>
    <property type="project" value="GO_Central"/>
</dbReference>
<dbReference type="GO" id="GO:0015918">
    <property type="term" value="P:sterol transport"/>
    <property type="evidence" value="ECO:0000318"/>
    <property type="project" value="GO_Central"/>
</dbReference>
<dbReference type="FunFam" id="2.60.40.770:FF:000017">
    <property type="entry name" value="Putative phosphatidylglycerol/phosphatidylinositol transfer protein DDB_G0282179"/>
    <property type="match status" value="1"/>
</dbReference>
<dbReference type="Gene3D" id="2.60.40.770">
    <property type="match status" value="1"/>
</dbReference>
<dbReference type="InterPro" id="IPR014756">
    <property type="entry name" value="Ig_E-set"/>
</dbReference>
<dbReference type="InterPro" id="IPR003172">
    <property type="entry name" value="ML_dom"/>
</dbReference>
<dbReference type="InterPro" id="IPR039670">
    <property type="entry name" value="NPC2-like"/>
</dbReference>
<dbReference type="PANTHER" id="PTHR11306">
    <property type="entry name" value="NIEMANN PICK TYPE C2 PROTEIN NPC2-RELATED"/>
    <property type="match status" value="1"/>
</dbReference>
<dbReference type="PANTHER" id="PTHR11306:SF0">
    <property type="entry name" value="PHOSPHATIDYLGLYCEROL_PHOSPHATIDYLINOSITOL TRANSFER PROTEIN"/>
    <property type="match status" value="1"/>
</dbReference>
<dbReference type="Pfam" id="PF02221">
    <property type="entry name" value="E1_DerP2_DerF2"/>
    <property type="match status" value="1"/>
</dbReference>
<dbReference type="SMART" id="SM00737">
    <property type="entry name" value="ML"/>
    <property type="match status" value="1"/>
</dbReference>
<dbReference type="SUPFAM" id="SSF81296">
    <property type="entry name" value="E set domains"/>
    <property type="match status" value="1"/>
</dbReference>
<name>Y2179_DICDI</name>
<reference key="1">
    <citation type="journal article" date="2005" name="Nature">
        <title>The genome of the social amoeba Dictyostelium discoideum.</title>
        <authorList>
            <person name="Eichinger L."/>
            <person name="Pachebat J.A."/>
            <person name="Gloeckner G."/>
            <person name="Rajandream M.A."/>
            <person name="Sucgang R."/>
            <person name="Berriman M."/>
            <person name="Song J."/>
            <person name="Olsen R."/>
            <person name="Szafranski K."/>
            <person name="Xu Q."/>
            <person name="Tunggal B."/>
            <person name="Kummerfeld S."/>
            <person name="Madera M."/>
            <person name="Konfortov B.A."/>
            <person name="Rivero F."/>
            <person name="Bankier A.T."/>
            <person name="Lehmann R."/>
            <person name="Hamlin N."/>
            <person name="Davies R."/>
            <person name="Gaudet P."/>
            <person name="Fey P."/>
            <person name="Pilcher K."/>
            <person name="Chen G."/>
            <person name="Saunders D."/>
            <person name="Sodergren E.J."/>
            <person name="Davis P."/>
            <person name="Kerhornou A."/>
            <person name="Nie X."/>
            <person name="Hall N."/>
            <person name="Anjard C."/>
            <person name="Hemphill L."/>
            <person name="Bason N."/>
            <person name="Farbrother P."/>
            <person name="Desany B."/>
            <person name="Just E."/>
            <person name="Morio T."/>
            <person name="Rost R."/>
            <person name="Churcher C.M."/>
            <person name="Cooper J."/>
            <person name="Haydock S."/>
            <person name="van Driessche N."/>
            <person name="Cronin A."/>
            <person name="Goodhead I."/>
            <person name="Muzny D.M."/>
            <person name="Mourier T."/>
            <person name="Pain A."/>
            <person name="Lu M."/>
            <person name="Harper D."/>
            <person name="Lindsay R."/>
            <person name="Hauser H."/>
            <person name="James K.D."/>
            <person name="Quiles M."/>
            <person name="Madan Babu M."/>
            <person name="Saito T."/>
            <person name="Buchrieser C."/>
            <person name="Wardroper A."/>
            <person name="Felder M."/>
            <person name="Thangavelu M."/>
            <person name="Johnson D."/>
            <person name="Knights A."/>
            <person name="Loulseged H."/>
            <person name="Mungall K.L."/>
            <person name="Oliver K."/>
            <person name="Price C."/>
            <person name="Quail M.A."/>
            <person name="Urushihara H."/>
            <person name="Hernandez J."/>
            <person name="Rabbinowitsch E."/>
            <person name="Steffen D."/>
            <person name="Sanders M."/>
            <person name="Ma J."/>
            <person name="Kohara Y."/>
            <person name="Sharp S."/>
            <person name="Simmonds M.N."/>
            <person name="Spiegler S."/>
            <person name="Tivey A."/>
            <person name="Sugano S."/>
            <person name="White B."/>
            <person name="Walker D."/>
            <person name="Woodward J.R."/>
            <person name="Winckler T."/>
            <person name="Tanaka Y."/>
            <person name="Shaulsky G."/>
            <person name="Schleicher M."/>
            <person name="Weinstock G.M."/>
            <person name="Rosenthal A."/>
            <person name="Cox E.C."/>
            <person name="Chisholm R.L."/>
            <person name="Gibbs R.A."/>
            <person name="Loomis W.F."/>
            <person name="Platzer M."/>
            <person name="Kay R.R."/>
            <person name="Williams J.G."/>
            <person name="Dear P.H."/>
            <person name="Noegel A.A."/>
            <person name="Barrell B.G."/>
            <person name="Kuspa A."/>
        </authorList>
    </citation>
    <scope>NUCLEOTIDE SEQUENCE [LARGE SCALE GENOMIC DNA]</scope>
    <source>
        <strain>AX4</strain>
    </source>
</reference>
<protein>
    <recommendedName>
        <fullName>Putative phosphatidylglycerol/phosphatidylinositol transfer protein DDB_G0282179</fullName>
    </recommendedName>
</protein>
<gene>
    <name type="ORF">DDB_G0282179</name>
</gene>
<organism>
    <name type="scientific">Dictyostelium discoideum</name>
    <name type="common">Social amoeba</name>
    <dbReference type="NCBI Taxonomy" id="44689"/>
    <lineage>
        <taxon>Eukaryota</taxon>
        <taxon>Amoebozoa</taxon>
        <taxon>Evosea</taxon>
        <taxon>Eumycetozoa</taxon>
        <taxon>Dictyostelia</taxon>
        <taxon>Dictyosteliales</taxon>
        <taxon>Dictyosteliaceae</taxon>
        <taxon>Dictyostelium</taxon>
    </lineage>
</organism>
<evidence type="ECO:0000250" key="1"/>
<evidence type="ECO:0000255" key="2"/>
<evidence type="ECO:0000305" key="3"/>
<proteinExistence type="inferred from homology"/>